<feature type="chain" id="PRO_0000292295" description="Pyridoxine/pyridoxamine 5'-phosphate oxidase">
    <location>
        <begin position="1"/>
        <end position="213"/>
    </location>
</feature>
<feature type="region of interest" description="Disordered" evidence="2">
    <location>
        <begin position="135"/>
        <end position="163"/>
    </location>
</feature>
<feature type="compositionally biased region" description="Basic and acidic residues" evidence="2">
    <location>
        <begin position="145"/>
        <end position="163"/>
    </location>
</feature>
<feature type="binding site" evidence="1">
    <location>
        <begin position="57"/>
        <end position="62"/>
    </location>
    <ligand>
        <name>FMN</name>
        <dbReference type="ChEBI" id="CHEBI:58210"/>
    </ligand>
</feature>
<feature type="binding site" evidence="1">
    <location>
        <position position="62"/>
    </location>
    <ligand>
        <name>substrate</name>
    </ligand>
</feature>
<feature type="binding site" evidence="1">
    <location>
        <begin position="77"/>
        <end position="78"/>
    </location>
    <ligand>
        <name>FMN</name>
        <dbReference type="ChEBI" id="CHEBI:58210"/>
    </ligand>
</feature>
<feature type="binding site" evidence="1">
    <location>
        <position position="83"/>
    </location>
    <ligand>
        <name>FMN</name>
        <dbReference type="ChEBI" id="CHEBI:58210"/>
    </ligand>
</feature>
<feature type="binding site" evidence="1">
    <location>
        <position position="84"/>
    </location>
    <ligand>
        <name>FMN</name>
        <dbReference type="ChEBI" id="CHEBI:58210"/>
    </ligand>
</feature>
<feature type="binding site" evidence="1">
    <location>
        <position position="106"/>
    </location>
    <ligand>
        <name>FMN</name>
        <dbReference type="ChEBI" id="CHEBI:58210"/>
    </ligand>
</feature>
<feature type="binding site" evidence="1">
    <location>
        <position position="124"/>
    </location>
    <ligand>
        <name>substrate</name>
    </ligand>
</feature>
<feature type="binding site" evidence="1">
    <location>
        <position position="128"/>
    </location>
    <ligand>
        <name>substrate</name>
    </ligand>
</feature>
<feature type="binding site" evidence="1">
    <location>
        <position position="132"/>
    </location>
    <ligand>
        <name>substrate</name>
    </ligand>
</feature>
<feature type="binding site" evidence="1">
    <location>
        <begin position="141"/>
        <end position="142"/>
    </location>
    <ligand>
        <name>FMN</name>
        <dbReference type="ChEBI" id="CHEBI:58210"/>
    </ligand>
</feature>
<feature type="binding site" evidence="1">
    <location>
        <position position="186"/>
    </location>
    <ligand>
        <name>FMN</name>
        <dbReference type="ChEBI" id="CHEBI:58210"/>
    </ligand>
</feature>
<feature type="binding site" evidence="1">
    <location>
        <begin position="192"/>
        <end position="194"/>
    </location>
    <ligand>
        <name>substrate</name>
    </ligand>
</feature>
<feature type="binding site" evidence="1">
    <location>
        <position position="196"/>
    </location>
    <ligand>
        <name>FMN</name>
        <dbReference type="ChEBI" id="CHEBI:58210"/>
    </ligand>
</feature>
<protein>
    <recommendedName>
        <fullName evidence="1">Pyridoxine/pyridoxamine 5'-phosphate oxidase</fullName>
        <ecNumber evidence="1">1.4.3.5</ecNumber>
    </recommendedName>
    <alternativeName>
        <fullName evidence="1">PNP/PMP oxidase</fullName>
        <shortName evidence="1">PNPOx</shortName>
    </alternativeName>
    <alternativeName>
        <fullName evidence="1">Pyridoxal 5'-phosphate synthase</fullName>
    </alternativeName>
</protein>
<dbReference type="EC" id="1.4.3.5" evidence="1"/>
<dbReference type="EMBL" id="CP000394">
    <property type="protein sequence ID" value="ABI61124.1"/>
    <property type="molecule type" value="Genomic_DNA"/>
</dbReference>
<dbReference type="RefSeq" id="WP_011630934.1">
    <property type="nucleotide sequence ID" value="NC_008343.2"/>
</dbReference>
<dbReference type="SMR" id="Q0BVM8"/>
<dbReference type="STRING" id="391165.GbCGDNIH1_0226"/>
<dbReference type="KEGG" id="gbe:GbCGDNIH1_0226"/>
<dbReference type="eggNOG" id="COG0259">
    <property type="taxonomic scope" value="Bacteria"/>
</dbReference>
<dbReference type="HOGENOM" id="CLU_032263_2_2_5"/>
<dbReference type="OrthoDB" id="9780392at2"/>
<dbReference type="UniPathway" id="UPA01068">
    <property type="reaction ID" value="UER00304"/>
</dbReference>
<dbReference type="UniPathway" id="UPA01068">
    <property type="reaction ID" value="UER00305"/>
</dbReference>
<dbReference type="Proteomes" id="UP000001963">
    <property type="component" value="Chromosome"/>
</dbReference>
<dbReference type="GO" id="GO:0010181">
    <property type="term" value="F:FMN binding"/>
    <property type="evidence" value="ECO:0007669"/>
    <property type="project" value="UniProtKB-UniRule"/>
</dbReference>
<dbReference type="GO" id="GO:0004733">
    <property type="term" value="F:pyridoxamine phosphate oxidase activity"/>
    <property type="evidence" value="ECO:0007669"/>
    <property type="project" value="UniProtKB-UniRule"/>
</dbReference>
<dbReference type="GO" id="GO:0008615">
    <property type="term" value="P:pyridoxine biosynthetic process"/>
    <property type="evidence" value="ECO:0007669"/>
    <property type="project" value="UniProtKB-KW"/>
</dbReference>
<dbReference type="Gene3D" id="2.30.110.10">
    <property type="entry name" value="Electron Transport, Fmn-binding Protein, Chain A"/>
    <property type="match status" value="1"/>
</dbReference>
<dbReference type="HAMAP" id="MF_01629">
    <property type="entry name" value="PdxH"/>
    <property type="match status" value="1"/>
</dbReference>
<dbReference type="InterPro" id="IPR000659">
    <property type="entry name" value="Pyridox_Oxase"/>
</dbReference>
<dbReference type="InterPro" id="IPR019740">
    <property type="entry name" value="Pyridox_Oxase_CS"/>
</dbReference>
<dbReference type="InterPro" id="IPR011576">
    <property type="entry name" value="Pyridox_Oxase_N"/>
</dbReference>
<dbReference type="InterPro" id="IPR019576">
    <property type="entry name" value="Pyridoxamine_oxidase_dimer_C"/>
</dbReference>
<dbReference type="InterPro" id="IPR012349">
    <property type="entry name" value="Split_barrel_FMN-bd"/>
</dbReference>
<dbReference type="NCBIfam" id="TIGR00558">
    <property type="entry name" value="pdxH"/>
    <property type="match status" value="1"/>
</dbReference>
<dbReference type="NCBIfam" id="NF004231">
    <property type="entry name" value="PRK05679.1"/>
    <property type="match status" value="1"/>
</dbReference>
<dbReference type="PANTHER" id="PTHR10851:SF0">
    <property type="entry name" value="PYRIDOXINE-5'-PHOSPHATE OXIDASE"/>
    <property type="match status" value="1"/>
</dbReference>
<dbReference type="PANTHER" id="PTHR10851">
    <property type="entry name" value="PYRIDOXINE-5-PHOSPHATE OXIDASE"/>
    <property type="match status" value="1"/>
</dbReference>
<dbReference type="Pfam" id="PF10590">
    <property type="entry name" value="PNP_phzG_C"/>
    <property type="match status" value="1"/>
</dbReference>
<dbReference type="Pfam" id="PF01243">
    <property type="entry name" value="PNPOx_N"/>
    <property type="match status" value="1"/>
</dbReference>
<dbReference type="PIRSF" id="PIRSF000190">
    <property type="entry name" value="Pyd_amn-ph_oxd"/>
    <property type="match status" value="1"/>
</dbReference>
<dbReference type="SUPFAM" id="SSF50475">
    <property type="entry name" value="FMN-binding split barrel"/>
    <property type="match status" value="1"/>
</dbReference>
<dbReference type="PROSITE" id="PS01064">
    <property type="entry name" value="PYRIDOX_OXIDASE"/>
    <property type="match status" value="1"/>
</dbReference>
<accession>Q0BVM8</accession>
<evidence type="ECO:0000255" key="1">
    <source>
        <dbReference type="HAMAP-Rule" id="MF_01629"/>
    </source>
</evidence>
<evidence type="ECO:0000256" key="2">
    <source>
        <dbReference type="SAM" id="MobiDB-lite"/>
    </source>
</evidence>
<organism>
    <name type="scientific">Granulibacter bethesdensis (strain ATCC BAA-1260 / CGDNIH1)</name>
    <dbReference type="NCBI Taxonomy" id="391165"/>
    <lineage>
        <taxon>Bacteria</taxon>
        <taxon>Pseudomonadati</taxon>
        <taxon>Pseudomonadota</taxon>
        <taxon>Alphaproteobacteria</taxon>
        <taxon>Acetobacterales</taxon>
        <taxon>Acetobacteraceae</taxon>
        <taxon>Granulibacter</taxon>
    </lineage>
</organism>
<keyword id="KW-0285">Flavoprotein</keyword>
<keyword id="KW-0288">FMN</keyword>
<keyword id="KW-0560">Oxidoreductase</keyword>
<keyword id="KW-0664">Pyridoxine biosynthesis</keyword>
<keyword id="KW-1185">Reference proteome</keyword>
<proteinExistence type="inferred from homology"/>
<reference key="1">
    <citation type="journal article" date="2007" name="J. Bacteriol.">
        <title>Genome sequence analysis of the emerging human pathogenic acetic acid bacterium Granulibacter bethesdensis.</title>
        <authorList>
            <person name="Greenberg D.E."/>
            <person name="Porcella S.F."/>
            <person name="Zelazny A.M."/>
            <person name="Virtaneva K."/>
            <person name="Sturdevant D.E."/>
            <person name="Kupko J.J. III"/>
            <person name="Barbian K.D."/>
            <person name="Babar A."/>
            <person name="Dorward D.W."/>
            <person name="Holland S.M."/>
        </authorList>
    </citation>
    <scope>NUCLEOTIDE SEQUENCE [LARGE SCALE GENOMIC DNA]</scope>
    <source>
        <strain>ATCC BAA-1260 / CGDNIH1</strain>
    </source>
</reference>
<name>PDXH_GRABC</name>
<sequence>MSMDSDAKSPFQTAELAFDDPFAAFSQWMEDARGAEPNDPNAMTLATASPSGVPSARIVLLRSVDAAEHPERGFVFFTNTESRKGVEIAANPQVALLFHWKSLGRQIRIEGKAIPVAVEEAESYFHTRPRISRLGARASDQSRPLPDRKTLQKRVEEEEARYPGDDIPRPAYWSGYRVTPTVIEFWQQMPFRLHDRLVFRRQGKNWGQEKLYP</sequence>
<comment type="function">
    <text evidence="1">Catalyzes the oxidation of either pyridoxine 5'-phosphate (PNP) or pyridoxamine 5'-phosphate (PMP) into pyridoxal 5'-phosphate (PLP).</text>
</comment>
<comment type="catalytic activity">
    <reaction evidence="1">
        <text>pyridoxamine 5'-phosphate + O2 + H2O = pyridoxal 5'-phosphate + H2O2 + NH4(+)</text>
        <dbReference type="Rhea" id="RHEA:15817"/>
        <dbReference type="ChEBI" id="CHEBI:15377"/>
        <dbReference type="ChEBI" id="CHEBI:15379"/>
        <dbReference type="ChEBI" id="CHEBI:16240"/>
        <dbReference type="ChEBI" id="CHEBI:28938"/>
        <dbReference type="ChEBI" id="CHEBI:58451"/>
        <dbReference type="ChEBI" id="CHEBI:597326"/>
        <dbReference type="EC" id="1.4.3.5"/>
    </reaction>
</comment>
<comment type="catalytic activity">
    <reaction evidence="1">
        <text>pyridoxine 5'-phosphate + O2 = pyridoxal 5'-phosphate + H2O2</text>
        <dbReference type="Rhea" id="RHEA:15149"/>
        <dbReference type="ChEBI" id="CHEBI:15379"/>
        <dbReference type="ChEBI" id="CHEBI:16240"/>
        <dbReference type="ChEBI" id="CHEBI:58589"/>
        <dbReference type="ChEBI" id="CHEBI:597326"/>
        <dbReference type="EC" id="1.4.3.5"/>
    </reaction>
</comment>
<comment type="cofactor">
    <cofactor evidence="1">
        <name>FMN</name>
        <dbReference type="ChEBI" id="CHEBI:58210"/>
    </cofactor>
    <text evidence="1">Binds 1 FMN per subunit.</text>
</comment>
<comment type="pathway">
    <text evidence="1">Cofactor metabolism; pyridoxal 5'-phosphate salvage; pyridoxal 5'-phosphate from pyridoxamine 5'-phosphate: step 1/1.</text>
</comment>
<comment type="pathway">
    <text evidence="1">Cofactor metabolism; pyridoxal 5'-phosphate salvage; pyridoxal 5'-phosphate from pyridoxine 5'-phosphate: step 1/1.</text>
</comment>
<comment type="subunit">
    <text evidence="1">Homodimer.</text>
</comment>
<comment type="similarity">
    <text evidence="1">Belongs to the pyridoxamine 5'-phosphate oxidase family.</text>
</comment>
<gene>
    <name evidence="1" type="primary">pdxH</name>
    <name type="ordered locus">GbCGDNIH1_0226</name>
</gene>